<name>MMP14_PIG</name>
<accession>Q9XT90</accession>
<gene>
    <name type="primary">MMP14</name>
</gene>
<keyword id="KW-0106">Calcium</keyword>
<keyword id="KW-0165">Cleavage on pair of basic residues</keyword>
<keyword id="KW-0963">Cytoplasm</keyword>
<keyword id="KW-1015">Disulfide bond</keyword>
<keyword id="KW-0378">Hydrolase</keyword>
<keyword id="KW-0472">Membrane</keyword>
<keyword id="KW-0479">Metal-binding</keyword>
<keyword id="KW-0482">Metalloprotease</keyword>
<keyword id="KW-0597">Phosphoprotein</keyword>
<keyword id="KW-0645">Protease</keyword>
<keyword id="KW-1185">Reference proteome</keyword>
<keyword id="KW-0677">Repeat</keyword>
<keyword id="KW-0732">Signal</keyword>
<keyword id="KW-0812">Transmembrane</keyword>
<keyword id="KW-1133">Transmembrane helix</keyword>
<keyword id="KW-0862">Zinc</keyword>
<keyword id="KW-0865">Zymogen</keyword>
<dbReference type="EC" id="3.4.24.80"/>
<dbReference type="EMBL" id="AF067419">
    <property type="protein sequence ID" value="AAD38324.1"/>
    <property type="molecule type" value="mRNA"/>
</dbReference>
<dbReference type="RefSeq" id="NP_999404.1">
    <property type="nucleotide sequence ID" value="NM_214239.1"/>
</dbReference>
<dbReference type="SMR" id="Q9XT90"/>
<dbReference type="FunCoup" id="Q9XT90">
    <property type="interactions" value="325"/>
</dbReference>
<dbReference type="STRING" id="9823.ENSSSCP00000022437"/>
<dbReference type="MEROPS" id="M10.014"/>
<dbReference type="PaxDb" id="9823-ENSSSCP00000002229"/>
<dbReference type="GeneID" id="397471"/>
<dbReference type="KEGG" id="ssc:397471"/>
<dbReference type="CTD" id="4323"/>
<dbReference type="eggNOG" id="KOG1565">
    <property type="taxonomic scope" value="Eukaryota"/>
</dbReference>
<dbReference type="InParanoid" id="Q9XT90"/>
<dbReference type="OrthoDB" id="406838at2759"/>
<dbReference type="Proteomes" id="UP000008227">
    <property type="component" value="Unplaced"/>
</dbReference>
<dbReference type="Proteomes" id="UP000314985">
    <property type="component" value="Unplaced"/>
</dbReference>
<dbReference type="Proteomes" id="UP000694570">
    <property type="component" value="Unplaced"/>
</dbReference>
<dbReference type="Proteomes" id="UP000694571">
    <property type="component" value="Unplaced"/>
</dbReference>
<dbReference type="Proteomes" id="UP000694720">
    <property type="component" value="Unplaced"/>
</dbReference>
<dbReference type="Proteomes" id="UP000694722">
    <property type="component" value="Unplaced"/>
</dbReference>
<dbReference type="Proteomes" id="UP000694723">
    <property type="component" value="Unplaced"/>
</dbReference>
<dbReference type="Proteomes" id="UP000694724">
    <property type="component" value="Unplaced"/>
</dbReference>
<dbReference type="Proteomes" id="UP000694725">
    <property type="component" value="Unplaced"/>
</dbReference>
<dbReference type="Proteomes" id="UP000694726">
    <property type="component" value="Unplaced"/>
</dbReference>
<dbReference type="Proteomes" id="UP000694727">
    <property type="component" value="Unplaced"/>
</dbReference>
<dbReference type="Proteomes" id="UP000694728">
    <property type="component" value="Unplaced"/>
</dbReference>
<dbReference type="GO" id="GO:0031012">
    <property type="term" value="C:extracellular matrix"/>
    <property type="evidence" value="ECO:0007669"/>
    <property type="project" value="InterPro"/>
</dbReference>
<dbReference type="GO" id="GO:0005615">
    <property type="term" value="C:extracellular space"/>
    <property type="evidence" value="ECO:0000318"/>
    <property type="project" value="GO_Central"/>
</dbReference>
<dbReference type="GO" id="GO:0042470">
    <property type="term" value="C:melanosome"/>
    <property type="evidence" value="ECO:0007669"/>
    <property type="project" value="UniProtKB-SubCell"/>
</dbReference>
<dbReference type="GO" id="GO:0005886">
    <property type="term" value="C:plasma membrane"/>
    <property type="evidence" value="ECO:0000318"/>
    <property type="project" value="GO_Central"/>
</dbReference>
<dbReference type="GO" id="GO:0004222">
    <property type="term" value="F:metalloendopeptidase activity"/>
    <property type="evidence" value="ECO:0000250"/>
    <property type="project" value="UniProtKB"/>
</dbReference>
<dbReference type="GO" id="GO:0008270">
    <property type="term" value="F:zinc ion binding"/>
    <property type="evidence" value="ECO:0007669"/>
    <property type="project" value="InterPro"/>
</dbReference>
<dbReference type="GO" id="GO:0048754">
    <property type="term" value="P:branching morphogenesis of an epithelial tube"/>
    <property type="evidence" value="ECO:0000250"/>
    <property type="project" value="AgBase"/>
</dbReference>
<dbReference type="GO" id="GO:0016477">
    <property type="term" value="P:cell migration"/>
    <property type="evidence" value="ECO:0000250"/>
    <property type="project" value="AgBase"/>
</dbReference>
<dbReference type="GO" id="GO:0030574">
    <property type="term" value="P:collagen catabolic process"/>
    <property type="evidence" value="ECO:0000318"/>
    <property type="project" value="GO_Central"/>
</dbReference>
<dbReference type="GO" id="GO:0030198">
    <property type="term" value="P:extracellular matrix organization"/>
    <property type="evidence" value="ECO:0000318"/>
    <property type="project" value="GO_Central"/>
</dbReference>
<dbReference type="GO" id="GO:0030324">
    <property type="term" value="P:lung development"/>
    <property type="evidence" value="ECO:0000250"/>
    <property type="project" value="AgBase"/>
</dbReference>
<dbReference type="GO" id="GO:0045746">
    <property type="term" value="P:negative regulation of Notch signaling pathway"/>
    <property type="evidence" value="ECO:0000250"/>
    <property type="project" value="UniProtKB"/>
</dbReference>
<dbReference type="GO" id="GO:0045579">
    <property type="term" value="P:positive regulation of B cell differentiation"/>
    <property type="evidence" value="ECO:0000250"/>
    <property type="project" value="UniProtKB"/>
</dbReference>
<dbReference type="GO" id="GO:0010831">
    <property type="term" value="P:positive regulation of myotube differentiation"/>
    <property type="evidence" value="ECO:0000250"/>
    <property type="project" value="UniProtKB"/>
</dbReference>
<dbReference type="GO" id="GO:0001501">
    <property type="term" value="P:skeletal system development"/>
    <property type="evidence" value="ECO:0000318"/>
    <property type="project" value="GO_Central"/>
</dbReference>
<dbReference type="GO" id="GO:0031638">
    <property type="term" value="P:zymogen activation"/>
    <property type="evidence" value="ECO:0000250"/>
    <property type="project" value="AgBase"/>
</dbReference>
<dbReference type="CDD" id="cd00094">
    <property type="entry name" value="HX"/>
    <property type="match status" value="1"/>
</dbReference>
<dbReference type="CDD" id="cd04278">
    <property type="entry name" value="ZnMc_MMP"/>
    <property type="match status" value="1"/>
</dbReference>
<dbReference type="FunFam" id="3.40.390.10:FF:000005">
    <property type="entry name" value="Matrix metallopeptidase 16"/>
    <property type="match status" value="1"/>
</dbReference>
<dbReference type="FunFam" id="2.110.10.10:FF:000001">
    <property type="entry name" value="Matrix metallopeptidase 24"/>
    <property type="match status" value="1"/>
</dbReference>
<dbReference type="FunFam" id="1.10.101.10:FF:000002">
    <property type="entry name" value="Matrix metalloproteinase-14 preproprotein"/>
    <property type="match status" value="1"/>
</dbReference>
<dbReference type="Gene3D" id="3.40.390.10">
    <property type="entry name" value="Collagenase (Catalytic Domain)"/>
    <property type="match status" value="1"/>
</dbReference>
<dbReference type="Gene3D" id="2.110.10.10">
    <property type="entry name" value="Hemopexin-like domain"/>
    <property type="match status" value="1"/>
</dbReference>
<dbReference type="Gene3D" id="1.10.101.10">
    <property type="entry name" value="PGBD-like superfamily/PGBD"/>
    <property type="match status" value="1"/>
</dbReference>
<dbReference type="InterPro" id="IPR000585">
    <property type="entry name" value="Hemopexin-like_dom"/>
</dbReference>
<dbReference type="InterPro" id="IPR036375">
    <property type="entry name" value="Hemopexin-like_dom_sf"/>
</dbReference>
<dbReference type="InterPro" id="IPR018487">
    <property type="entry name" value="Hemopexin-like_repeat"/>
</dbReference>
<dbReference type="InterPro" id="IPR018486">
    <property type="entry name" value="Hemopexin_CS"/>
</dbReference>
<dbReference type="InterPro" id="IPR033739">
    <property type="entry name" value="M10A_MMP"/>
</dbReference>
<dbReference type="InterPro" id="IPR024079">
    <property type="entry name" value="MetalloPept_cat_dom_sf"/>
</dbReference>
<dbReference type="InterPro" id="IPR001818">
    <property type="entry name" value="Pept_M10_metallopeptidase"/>
</dbReference>
<dbReference type="InterPro" id="IPR021190">
    <property type="entry name" value="Pept_M10A"/>
</dbReference>
<dbReference type="InterPro" id="IPR021805">
    <property type="entry name" value="Pept_M10A_metallopeptidase_C"/>
</dbReference>
<dbReference type="InterPro" id="IPR021158">
    <property type="entry name" value="Pept_M10A_Zn_BS"/>
</dbReference>
<dbReference type="InterPro" id="IPR006026">
    <property type="entry name" value="Peptidase_Metallo"/>
</dbReference>
<dbReference type="InterPro" id="IPR002477">
    <property type="entry name" value="Peptidoglycan-bd-like"/>
</dbReference>
<dbReference type="InterPro" id="IPR036365">
    <property type="entry name" value="PGBD-like_sf"/>
</dbReference>
<dbReference type="InterPro" id="IPR036366">
    <property type="entry name" value="PGBDSf"/>
</dbReference>
<dbReference type="PANTHER" id="PTHR10201">
    <property type="entry name" value="MATRIX METALLOPROTEINASE"/>
    <property type="match status" value="1"/>
</dbReference>
<dbReference type="PANTHER" id="PTHR10201:SF24">
    <property type="entry name" value="MATRIX METALLOPROTEINASE-14"/>
    <property type="match status" value="1"/>
</dbReference>
<dbReference type="Pfam" id="PF11857">
    <property type="entry name" value="DUF3377"/>
    <property type="match status" value="1"/>
</dbReference>
<dbReference type="Pfam" id="PF00045">
    <property type="entry name" value="Hemopexin"/>
    <property type="match status" value="4"/>
</dbReference>
<dbReference type="Pfam" id="PF00413">
    <property type="entry name" value="Peptidase_M10"/>
    <property type="match status" value="1"/>
</dbReference>
<dbReference type="Pfam" id="PF01471">
    <property type="entry name" value="PG_binding_1"/>
    <property type="match status" value="1"/>
</dbReference>
<dbReference type="PIRSF" id="PIRSF001191">
    <property type="entry name" value="Peptidase_M10A_matrix"/>
    <property type="match status" value="1"/>
</dbReference>
<dbReference type="PRINTS" id="PR00138">
    <property type="entry name" value="MATRIXIN"/>
</dbReference>
<dbReference type="SMART" id="SM00120">
    <property type="entry name" value="HX"/>
    <property type="match status" value="4"/>
</dbReference>
<dbReference type="SMART" id="SM00235">
    <property type="entry name" value="ZnMc"/>
    <property type="match status" value="1"/>
</dbReference>
<dbReference type="SUPFAM" id="SSF50923">
    <property type="entry name" value="Hemopexin-like domain"/>
    <property type="match status" value="1"/>
</dbReference>
<dbReference type="SUPFAM" id="SSF55486">
    <property type="entry name" value="Metalloproteases ('zincins'), catalytic domain"/>
    <property type="match status" value="1"/>
</dbReference>
<dbReference type="SUPFAM" id="SSF47090">
    <property type="entry name" value="PGBD-like"/>
    <property type="match status" value="1"/>
</dbReference>
<dbReference type="PROSITE" id="PS00546">
    <property type="entry name" value="CYSTEINE_SWITCH"/>
    <property type="match status" value="1"/>
</dbReference>
<dbReference type="PROSITE" id="PS00024">
    <property type="entry name" value="HEMOPEXIN"/>
    <property type="match status" value="1"/>
</dbReference>
<dbReference type="PROSITE" id="PS51642">
    <property type="entry name" value="HEMOPEXIN_2"/>
    <property type="match status" value="4"/>
</dbReference>
<dbReference type="PROSITE" id="PS00142">
    <property type="entry name" value="ZINC_PROTEASE"/>
    <property type="match status" value="1"/>
</dbReference>
<organism>
    <name type="scientific">Sus scrofa</name>
    <name type="common">Pig</name>
    <dbReference type="NCBI Taxonomy" id="9823"/>
    <lineage>
        <taxon>Eukaryota</taxon>
        <taxon>Metazoa</taxon>
        <taxon>Chordata</taxon>
        <taxon>Craniata</taxon>
        <taxon>Vertebrata</taxon>
        <taxon>Euteleostomi</taxon>
        <taxon>Mammalia</taxon>
        <taxon>Eutheria</taxon>
        <taxon>Laurasiatheria</taxon>
        <taxon>Artiodactyla</taxon>
        <taxon>Suina</taxon>
        <taxon>Suidae</taxon>
        <taxon>Sus</taxon>
    </lineage>
</organism>
<evidence type="ECO:0000250" key="1"/>
<evidence type="ECO:0000250" key="2">
    <source>
        <dbReference type="UniProtKB" id="P50281"/>
    </source>
</evidence>
<evidence type="ECO:0000250" key="3">
    <source>
        <dbReference type="UniProtKB" id="P53690"/>
    </source>
</evidence>
<evidence type="ECO:0000255" key="4"/>
<evidence type="ECO:0000255" key="5">
    <source>
        <dbReference type="PROSITE-ProRule" id="PRU10095"/>
    </source>
</evidence>
<evidence type="ECO:0000256" key="6">
    <source>
        <dbReference type="SAM" id="MobiDB-lite"/>
    </source>
</evidence>
<evidence type="ECO:0000305" key="7"/>
<protein>
    <recommendedName>
        <fullName>Matrix metalloproteinase-14</fullName>
        <shortName>MMP-14</shortName>
        <ecNumber>3.4.24.80</ecNumber>
    </recommendedName>
    <alternativeName>
        <fullName>Membrane-type matrix metalloproteinase 1</fullName>
        <shortName>MT-MMP 1</shortName>
        <shortName>MTMMP1</shortName>
    </alternativeName>
    <alternativeName>
        <fullName>Membrane-type-1 matrix metalloproteinase</fullName>
        <shortName>MT1-MMP</shortName>
        <shortName>MT1MMP</shortName>
    </alternativeName>
</protein>
<proteinExistence type="evidence at transcript level"/>
<reference key="1">
    <citation type="journal article" date="1998" name="Matrix Biol.">
        <title>Expression and localization of membrane type 1 matrix metalloproteinase in tooth tissues.</title>
        <authorList>
            <person name="Caron C."/>
            <person name="Xue J."/>
            <person name="Bartlett J.D."/>
        </authorList>
    </citation>
    <scope>NUCLEOTIDE SEQUENCE [MRNA]</scope>
</reference>
<sequence>MSPAPRPVRSLLLPLLTLASALASLSSAQSFSPEAWLQQYGYLPPGDLRTHTQRSPQSLSAAIAAMQRFYGLRVTGKADADTMKAMRRPRCGVPDKFGAEIKANVRRKRYAIQGLKWQHNEITFCIQNYTPKVGEYATFEAIRKAFRVWESATPLRFREVPYAYIREGHEKQADIMIFFAEGFHGDSTPFDGEGGFLAHAYFPGPNIGGDTHFDSAEPWTVRNEDLNGNDIFLVAVHELGHALGLEHSNDPSAIMAPFYQWMDTENFVLPDDDRRGIQQLYGSESGFPTKMPPQPRTTSKPSVPDKPKNPTYGPNICDGNFDTVAMLRGEMFVFKERWFWRVRKNQVMDGYPMPIGQFWRGLPASINTAYERKDGKFVFFKGDKHWVFDEASLEPGYPKHIKELGRRLPTDKIDAALFWMPNGKDYFFRGNKYYRFNEELRAVDSEYPKNIKVWEGIPESPRGSFMGSDEVFTYFYKGNKYWKFNNQKLKVEPGYPKSALRDWMGCPSGGRPDEGTEEETEVIIIEVDEEGSGAVSAAAVVLPVLLLLLVLAVGLAVFFFRRHGTPKRLLYCQRSLLDKV</sequence>
<feature type="signal peptide" evidence="4">
    <location>
        <begin position="1"/>
        <end position="28"/>
    </location>
</feature>
<feature type="propeptide" id="PRO_0000028802" description="Activation peptide">
    <location>
        <begin position="29"/>
        <end position="109"/>
    </location>
</feature>
<feature type="chain" id="PRO_0000028803" description="Matrix metalloproteinase-14">
    <location>
        <begin position="110"/>
        <end position="580"/>
    </location>
</feature>
<feature type="topological domain" description="Extracellular" evidence="4">
    <location>
        <begin position="110"/>
        <end position="539"/>
    </location>
</feature>
<feature type="transmembrane region" description="Helical" evidence="4">
    <location>
        <begin position="540"/>
        <end position="560"/>
    </location>
</feature>
<feature type="topological domain" description="Cytoplasmic" evidence="4">
    <location>
        <begin position="561"/>
        <end position="580"/>
    </location>
</feature>
<feature type="repeat" description="Hemopexin 1">
    <location>
        <begin position="314"/>
        <end position="362"/>
    </location>
</feature>
<feature type="repeat" description="Hemopexin 2">
    <location>
        <begin position="363"/>
        <end position="408"/>
    </location>
</feature>
<feature type="repeat" description="Hemopexin 3">
    <location>
        <begin position="410"/>
        <end position="458"/>
    </location>
</feature>
<feature type="repeat" description="Hemopexin 4">
    <location>
        <begin position="459"/>
        <end position="506"/>
    </location>
</feature>
<feature type="region of interest" description="Disordered" evidence="6">
    <location>
        <begin position="282"/>
        <end position="314"/>
    </location>
</feature>
<feature type="short sequence motif" description="Cysteine switch" evidence="1">
    <location>
        <begin position="89"/>
        <end position="96"/>
    </location>
</feature>
<feature type="active site" evidence="5">
    <location>
        <position position="238"/>
    </location>
</feature>
<feature type="binding site" description="in inhibited form" evidence="1">
    <location>
        <position position="91"/>
    </location>
    <ligand>
        <name>Zn(2+)</name>
        <dbReference type="ChEBI" id="CHEBI:29105"/>
        <note>catalytic</note>
    </ligand>
</feature>
<feature type="binding site" evidence="5">
    <location>
        <position position="237"/>
    </location>
    <ligand>
        <name>Zn(2+)</name>
        <dbReference type="ChEBI" id="CHEBI:29105"/>
        <note>catalytic</note>
    </ligand>
</feature>
<feature type="binding site" evidence="5">
    <location>
        <position position="241"/>
    </location>
    <ligand>
        <name>Zn(2+)</name>
        <dbReference type="ChEBI" id="CHEBI:29105"/>
        <note>catalytic</note>
    </ligand>
</feature>
<feature type="binding site" evidence="5">
    <location>
        <position position="247"/>
    </location>
    <ligand>
        <name>Zn(2+)</name>
        <dbReference type="ChEBI" id="CHEBI:29105"/>
        <note>catalytic</note>
    </ligand>
</feature>
<feature type="modified residue" description="Phosphotyrosine; by PKDCC" evidence="2">
    <location>
        <position position="397"/>
    </location>
</feature>
<feature type="disulfide bond" evidence="1">
    <location>
        <begin position="317"/>
        <end position="506"/>
    </location>
</feature>
<comment type="function">
    <text evidence="2 3">Endopeptidase that degrades various components of the extracellular matrix, such as collagen. Activates progelatinase A. Essential for pericellular collagenolysis and modeling of skeletal and extraskeletal connective tissues during development. May be involved in actin cytoskeleton reorganization by cleaving PTK7. Acts as a positive regulator of cell growth and migration via activation of MMP15 in association with pro-MMP2. Involved in the formation of the fibrovascular tissues in association with pro-MMP2. Cleaves ADGRB1 to release vasculostatin-40 which inhibits angiogenesis.</text>
</comment>
<comment type="catalytic activity">
    <reaction>
        <text>Endopeptidase activity. Activates progelatinase A by cleavage of the propeptide at 37-Asn-|-Leu-38. Other bonds hydrolyzed include 35-Gly-|-Ile-36 in the propeptide of collagenase 3, and 341-Asn-|-Phe-342, 441-Asp-|-Leu-442 and 354-Gln-|-Thr-355 in the aggrecan interglobular domain.</text>
        <dbReference type="EC" id="3.4.24.80"/>
    </reaction>
</comment>
<comment type="cofactor">
    <cofactor evidence="1">
        <name>Zn(2+)</name>
        <dbReference type="ChEBI" id="CHEBI:29105"/>
    </cofactor>
    <text evidence="1">Binds 1 zinc ion per subunit.</text>
</comment>
<comment type="cofactor">
    <cofactor evidence="1">
        <name>Ca(2+)</name>
        <dbReference type="ChEBI" id="CHEBI:29108"/>
    </cofactor>
</comment>
<comment type="subunit">
    <text evidence="2">Interacts (via C-terminal cytoplasmic tail) with BST2. Interacts with DLL1; inhibits DLL1-induced Notch signaling.</text>
</comment>
<comment type="subcellular location">
    <subcellularLocation>
        <location evidence="7">Membrane</location>
        <topology evidence="7">Single-pass type I membrane protein</topology>
    </subcellularLocation>
    <subcellularLocation>
        <location evidence="1">Melanosome</location>
    </subcellularLocation>
    <subcellularLocation>
        <location evidence="1">Cytoplasm</location>
    </subcellularLocation>
    <text evidence="1">Forms a complex with BST2 and localizes to the cytoplasm.</text>
</comment>
<comment type="tissue specificity">
    <text>Highly expressed in developing tooth tissues.</text>
</comment>
<comment type="domain">
    <text>The conserved cysteine present in the cysteine-switch motif binds the catalytic zinc ion, thus inhibiting the enzyme. The dissociation of the cysteine from the zinc ion upon the activation-peptide release activates the enzyme.</text>
</comment>
<comment type="PTM">
    <text evidence="2">Tyrosine phosphorylated by PKDCC/VLK.</text>
</comment>
<comment type="similarity">
    <text evidence="7">Belongs to the peptidase M10A family.</text>
</comment>